<organism>
    <name type="scientific">Cryptococcus neoformans var. neoformans serotype D (strain B-3501A)</name>
    <name type="common">Filobasidiella neoformans</name>
    <dbReference type="NCBI Taxonomy" id="283643"/>
    <lineage>
        <taxon>Eukaryota</taxon>
        <taxon>Fungi</taxon>
        <taxon>Dikarya</taxon>
        <taxon>Basidiomycota</taxon>
        <taxon>Agaricomycotina</taxon>
        <taxon>Tremellomycetes</taxon>
        <taxon>Tremellales</taxon>
        <taxon>Cryptococcaceae</taxon>
        <taxon>Cryptococcus</taxon>
        <taxon>Cryptococcus neoformans species complex</taxon>
    </lineage>
</organism>
<feature type="chain" id="PRO_0000410095" description="Structure-specific endonuclease subunit SLX1">
    <location>
        <begin position="1"/>
        <end position="487"/>
    </location>
</feature>
<feature type="domain" description="GIY-YIG" evidence="1">
    <location>
        <begin position="27"/>
        <end position="109"/>
    </location>
</feature>
<feature type="zinc finger region" description="SLX1-type" evidence="1">
    <location>
        <begin position="262"/>
        <end position="328"/>
    </location>
</feature>
<feature type="region of interest" description="Disordered" evidence="2">
    <location>
        <begin position="44"/>
        <end position="69"/>
    </location>
</feature>
<feature type="region of interest" description="Disordered" evidence="2">
    <location>
        <begin position="359"/>
        <end position="407"/>
    </location>
</feature>
<feature type="region of interest" description="Disordered" evidence="2">
    <location>
        <begin position="433"/>
        <end position="475"/>
    </location>
</feature>
<feature type="compositionally biased region" description="Basic and acidic residues" evidence="2">
    <location>
        <begin position="359"/>
        <end position="396"/>
    </location>
</feature>
<feature type="compositionally biased region" description="Polar residues" evidence="2">
    <location>
        <begin position="397"/>
        <end position="407"/>
    </location>
</feature>
<feature type="compositionally biased region" description="Basic and acidic residues" evidence="2">
    <location>
        <begin position="438"/>
        <end position="455"/>
    </location>
</feature>
<feature type="compositionally biased region" description="Acidic residues" evidence="2">
    <location>
        <begin position="465"/>
        <end position="475"/>
    </location>
</feature>
<dbReference type="EC" id="3.1.-.-" evidence="1"/>
<dbReference type="EMBL" id="AAEY01000002">
    <property type="protein sequence ID" value="EAL23248.1"/>
    <property type="molecule type" value="Genomic_DNA"/>
</dbReference>
<dbReference type="RefSeq" id="XP_777895.1">
    <property type="nucleotide sequence ID" value="XM_772802.1"/>
</dbReference>
<dbReference type="SMR" id="P0CN81"/>
<dbReference type="EnsemblFungi" id="AAW41340">
    <property type="protein sequence ID" value="AAW41340"/>
    <property type="gene ID" value="CNA03830"/>
</dbReference>
<dbReference type="GeneID" id="4933622"/>
<dbReference type="KEGG" id="cnb:CNBA3640"/>
<dbReference type="VEuPathDB" id="FungiDB:CNBA3640"/>
<dbReference type="HOGENOM" id="CLU_030739_0_0_1"/>
<dbReference type="OrthoDB" id="3110at5206"/>
<dbReference type="GO" id="GO:0033557">
    <property type="term" value="C:Slx1-Slx4 complex"/>
    <property type="evidence" value="ECO:0007669"/>
    <property type="project" value="UniProtKB-UniRule"/>
</dbReference>
<dbReference type="GO" id="GO:0017108">
    <property type="term" value="F:5'-flap endonuclease activity"/>
    <property type="evidence" value="ECO:0007669"/>
    <property type="project" value="InterPro"/>
</dbReference>
<dbReference type="GO" id="GO:0008821">
    <property type="term" value="F:crossover junction DNA endonuclease activity"/>
    <property type="evidence" value="ECO:0007669"/>
    <property type="project" value="TreeGrafter"/>
</dbReference>
<dbReference type="GO" id="GO:0008270">
    <property type="term" value="F:zinc ion binding"/>
    <property type="evidence" value="ECO:0007669"/>
    <property type="project" value="UniProtKB-KW"/>
</dbReference>
<dbReference type="GO" id="GO:0000724">
    <property type="term" value="P:double-strand break repair via homologous recombination"/>
    <property type="evidence" value="ECO:0007669"/>
    <property type="project" value="TreeGrafter"/>
</dbReference>
<dbReference type="CDD" id="cd10455">
    <property type="entry name" value="GIY-YIG_SLX1"/>
    <property type="match status" value="1"/>
</dbReference>
<dbReference type="FunFam" id="3.40.1440.10:FF:000006">
    <property type="entry name" value="Structure-specific endonuclease subunit SLX1"/>
    <property type="match status" value="1"/>
</dbReference>
<dbReference type="Gene3D" id="3.40.1440.10">
    <property type="entry name" value="GIY-YIG endonuclease"/>
    <property type="match status" value="1"/>
</dbReference>
<dbReference type="Gene3D" id="3.30.40.10">
    <property type="entry name" value="Zinc/RING finger domain, C3HC4 (zinc finger)"/>
    <property type="match status" value="1"/>
</dbReference>
<dbReference type="HAMAP" id="MF_03100">
    <property type="entry name" value="Endonuc_su_Slx1"/>
    <property type="match status" value="1"/>
</dbReference>
<dbReference type="InterPro" id="IPR000305">
    <property type="entry name" value="GIY-YIG_endonuc"/>
</dbReference>
<dbReference type="InterPro" id="IPR035901">
    <property type="entry name" value="GIY-YIG_endonuc_sf"/>
</dbReference>
<dbReference type="InterPro" id="IPR027520">
    <property type="entry name" value="Slx1"/>
</dbReference>
<dbReference type="InterPro" id="IPR048749">
    <property type="entry name" value="SLX1_C"/>
</dbReference>
<dbReference type="InterPro" id="IPR050381">
    <property type="entry name" value="SLX1_endonuclease"/>
</dbReference>
<dbReference type="InterPro" id="IPR013083">
    <property type="entry name" value="Znf_RING/FYVE/PHD"/>
</dbReference>
<dbReference type="PANTHER" id="PTHR20208">
    <property type="entry name" value="STRUCTURE-SPECIFIC ENDONUCLEASE SUBUNIT SLX1"/>
    <property type="match status" value="1"/>
</dbReference>
<dbReference type="PANTHER" id="PTHR20208:SF10">
    <property type="entry name" value="STRUCTURE-SPECIFIC ENDONUCLEASE SUBUNIT SLX1"/>
    <property type="match status" value="1"/>
</dbReference>
<dbReference type="Pfam" id="PF01541">
    <property type="entry name" value="GIY-YIG"/>
    <property type="match status" value="1"/>
</dbReference>
<dbReference type="Pfam" id="PF21202">
    <property type="entry name" value="SLX1_C"/>
    <property type="match status" value="1"/>
</dbReference>
<dbReference type="SUPFAM" id="SSF82771">
    <property type="entry name" value="GIY-YIG endonuclease"/>
    <property type="match status" value="1"/>
</dbReference>
<dbReference type="PROSITE" id="PS50164">
    <property type="entry name" value="GIY_YIG"/>
    <property type="match status" value="1"/>
</dbReference>
<accession>P0CN81</accession>
<accession>Q55ZX6</accession>
<accession>Q5KP85</accession>
<name>SLX1_CRYNB</name>
<comment type="function">
    <text evidence="1">Catalytic subunit of the SLX1-SLX4 structure-specific endonuclease that resolves DNA secondary structures generated during DNA repair and recombination. Has endonuclease activity towards branched DNA substrates, introducing single-strand cuts in duplex DNA close to junctions with ss-DNA.</text>
</comment>
<comment type="cofactor">
    <cofactor evidence="1">
        <name>a divalent metal cation</name>
        <dbReference type="ChEBI" id="CHEBI:60240"/>
    </cofactor>
</comment>
<comment type="subunit">
    <text evidence="1">Forms a heterodimer with SLX4.</text>
</comment>
<comment type="subcellular location">
    <subcellularLocation>
        <location evidence="1">Nucleus</location>
    </subcellularLocation>
</comment>
<comment type="similarity">
    <text evidence="1">Belongs to the SLX1 family.</text>
</comment>
<sequence length="487" mass="55142">MSDDAEVTNNKKTTKSTLLDGNHIFPPFYACYLLRSKATANSNRTYVGSTPDPPRRIRQHNGELKQGAWSTSRHRPWEMQMIVYGFPSKLAALQFEWAWQKPELSRHLRIRGEDQEYYHIFTKDARRNWVERKVCVAYALISLTPFNRLPLHVRFFNHETHGIWQSIHEQAGVNTIQRGKSRAKPVNPLHLLSQSVAPAVTIILDLGGVSGTSGKRRECTKGVMSHEGPIDVKDVEFRQGFGVRGKWLEIRKRILSGQDLCCHLCQERIAFNDHLTFSICPLAESQDCFCITHLICLAKHFQDEAPVEDRRAPSQPKILPYQGLCPNCKRTVQWGQHIRACYARKEQVEKAEKAEKAEKAEKAEKAEKAEKAEKAEKAEKAGRKVRQREMKTKKGDQSNGTVAQPESIYSATPVHTTFGLSNASATLIDPSMPARSMKSKDVGGEGIRHSTHTDDSDGIISVYSETEDESESEPEWEIFEAEMMALS</sequence>
<proteinExistence type="inferred from homology"/>
<reference key="1">
    <citation type="journal article" date="2005" name="Science">
        <title>The genome of the basidiomycetous yeast and human pathogen Cryptococcus neoformans.</title>
        <authorList>
            <person name="Loftus B.J."/>
            <person name="Fung E."/>
            <person name="Roncaglia P."/>
            <person name="Rowley D."/>
            <person name="Amedeo P."/>
            <person name="Bruno D."/>
            <person name="Vamathevan J."/>
            <person name="Miranda M."/>
            <person name="Anderson I.J."/>
            <person name="Fraser J.A."/>
            <person name="Allen J.E."/>
            <person name="Bosdet I.E."/>
            <person name="Brent M.R."/>
            <person name="Chiu R."/>
            <person name="Doering T.L."/>
            <person name="Donlin M.J."/>
            <person name="D'Souza C.A."/>
            <person name="Fox D.S."/>
            <person name="Grinberg V."/>
            <person name="Fu J."/>
            <person name="Fukushima M."/>
            <person name="Haas B.J."/>
            <person name="Huang J.C."/>
            <person name="Janbon G."/>
            <person name="Jones S.J.M."/>
            <person name="Koo H.L."/>
            <person name="Krzywinski M.I."/>
            <person name="Kwon-Chung K.J."/>
            <person name="Lengeler K.B."/>
            <person name="Maiti R."/>
            <person name="Marra M.A."/>
            <person name="Marra R.E."/>
            <person name="Mathewson C.A."/>
            <person name="Mitchell T.G."/>
            <person name="Pertea M."/>
            <person name="Riggs F.R."/>
            <person name="Salzberg S.L."/>
            <person name="Schein J.E."/>
            <person name="Shvartsbeyn A."/>
            <person name="Shin H."/>
            <person name="Shumway M."/>
            <person name="Specht C.A."/>
            <person name="Suh B.B."/>
            <person name="Tenney A."/>
            <person name="Utterback T.R."/>
            <person name="Wickes B.L."/>
            <person name="Wortman J.R."/>
            <person name="Wye N.H."/>
            <person name="Kronstad J.W."/>
            <person name="Lodge J.K."/>
            <person name="Heitman J."/>
            <person name="Davis R.W."/>
            <person name="Fraser C.M."/>
            <person name="Hyman R.W."/>
        </authorList>
    </citation>
    <scope>NUCLEOTIDE SEQUENCE [LARGE SCALE GENOMIC DNA]</scope>
    <source>
        <strain>B-3501A</strain>
    </source>
</reference>
<evidence type="ECO:0000255" key="1">
    <source>
        <dbReference type="HAMAP-Rule" id="MF_03100"/>
    </source>
</evidence>
<evidence type="ECO:0000256" key="2">
    <source>
        <dbReference type="SAM" id="MobiDB-lite"/>
    </source>
</evidence>
<keyword id="KW-0227">DNA damage</keyword>
<keyword id="KW-0233">DNA recombination</keyword>
<keyword id="KW-0234">DNA repair</keyword>
<keyword id="KW-0255">Endonuclease</keyword>
<keyword id="KW-0378">Hydrolase</keyword>
<keyword id="KW-0479">Metal-binding</keyword>
<keyword id="KW-0540">Nuclease</keyword>
<keyword id="KW-0539">Nucleus</keyword>
<keyword id="KW-0862">Zinc</keyword>
<keyword id="KW-0863">Zinc-finger</keyword>
<protein>
    <recommendedName>
        <fullName evidence="1">Structure-specific endonuclease subunit SLX1</fullName>
        <ecNumber evidence="1">3.1.-.-</ecNumber>
    </recommendedName>
</protein>
<gene>
    <name evidence="1" type="primary">SLX1</name>
    <name type="ordered locus">CNBA3640</name>
</gene>